<accession>P20496</accession>
<evidence type="ECO:0000250" key="1"/>
<evidence type="ECO:0000250" key="2">
    <source>
        <dbReference type="UniProtKB" id="P08583"/>
    </source>
</evidence>
<evidence type="ECO:0000255" key="3"/>
<evidence type="ECO:0000305" key="4"/>
<comment type="function">
    <text evidence="2">Envelope protein part of the entry-fusion complex responsible for the virus membrane fusion with host cell membrane during virus entry. Also plays a role in cell-cell fusion (syncytium formation).</text>
</comment>
<comment type="subunit">
    <text evidence="2">Part of a stable entry-fusion complex (EFC) which is at least composed of proteins OPG143, OPG147, OPG155, OPG86, OPG94, OPG107, OPG104, and OPG099. Formation of the viral membrane is necessary for the assembly of the complex.</text>
</comment>
<comment type="subcellular location">
    <subcellularLocation>
        <location evidence="2">Virion membrane</location>
        <topology evidence="2">Single-pass type III membrane protein</topology>
    </subcellularLocation>
    <subcellularLocation>
        <location evidence="2">Host endoplasmic reticulum membrane</location>
    </subcellularLocation>
    <text evidence="1">Component of the mature virion (MV) membrane (By similarity). The mature virion is located in the cytoplasm of infected cells and is probably released by cell lysis.</text>
</comment>
<comment type="PTM">
    <text evidence="2">Contains two intramolecular disulfide bonds. They are created by the viral disulfide bond formation pathway, a poxvirus-specific pathway that operates on the cytoplasmic side of the MV membranes.</text>
</comment>
<comment type="similarity">
    <text evidence="4">Belongs to the orthopoxvirus OPG107 family.</text>
</comment>
<name>PG107_VACCC</name>
<reference key="1">
    <citation type="journal article" date="1990" name="Virology">
        <title>The complete DNA sequence of vaccinia virus.</title>
        <authorList>
            <person name="Goebel S.J."/>
            <person name="Johnson G.P."/>
            <person name="Perkus M.E."/>
            <person name="Davis S.W."/>
            <person name="Winslow J.P."/>
            <person name="Paoletti E."/>
        </authorList>
    </citation>
    <scope>NUCLEOTIDE SEQUENCE [LARGE SCALE GENOMIC DNA]</scope>
</reference>
<reference key="2">
    <citation type="journal article" date="1990" name="Virology">
        <title>Appendix to 'The complete DNA sequence of vaccinia virus'.</title>
        <authorList>
            <person name="Goebel S.J."/>
            <person name="Johnson G.P."/>
            <person name="Perkus M.E."/>
            <person name="Davis S.W."/>
            <person name="Winslow J.P."/>
            <person name="Paoletti E."/>
        </authorList>
    </citation>
    <scope>NUCLEOTIDE SEQUENCE [LARGE SCALE GENOMIC DNA]</scope>
</reference>
<sequence>MDKTTLSVNACNLEYVREKAIVGVQAAKTSTLIFFVIILAISALLLWFQTSDNPVFNELTRYMRIKNTVNDWKSLTDSKTKLESDRGKLLAAGKDDIFEFKCVDFGAYFIAMRLDKKTYLPQAIRRGTGDAWMVKKAAKVDPSAQQFCQYLIKHKSNNVITCGNEMLNELGYSGYFMSPHWCSDFSNME</sequence>
<protein>
    <recommendedName>
        <fullName>Protein H2</fullName>
    </recommendedName>
</protein>
<organism>
    <name type="scientific">Vaccinia virus (strain Copenhagen)</name>
    <name type="common">VACV</name>
    <dbReference type="NCBI Taxonomy" id="10249"/>
    <lineage>
        <taxon>Viruses</taxon>
        <taxon>Varidnaviria</taxon>
        <taxon>Bamfordvirae</taxon>
        <taxon>Nucleocytoviricota</taxon>
        <taxon>Pokkesviricetes</taxon>
        <taxon>Chitovirales</taxon>
        <taxon>Poxviridae</taxon>
        <taxon>Chordopoxvirinae</taxon>
        <taxon>Orthopoxvirus</taxon>
        <taxon>Vaccinia virus</taxon>
    </lineage>
</organism>
<organismHost>
    <name type="scientific">Homo sapiens</name>
    <name type="common">Human</name>
    <dbReference type="NCBI Taxonomy" id="9606"/>
</organismHost>
<feature type="chain" id="PRO_0000099547" description="Protein H2">
    <location>
        <begin position="1"/>
        <end position="189"/>
    </location>
</feature>
<feature type="topological domain" description="Intravirion" evidence="3">
    <location>
        <begin position="1"/>
        <end position="28"/>
    </location>
</feature>
<feature type="transmembrane region" description="Helical; Signal-anchor for type III membrane protein" evidence="3">
    <location>
        <begin position="29"/>
        <end position="49"/>
    </location>
</feature>
<feature type="topological domain" description="Virion surface" evidence="3">
    <location>
        <begin position="50"/>
        <end position="189"/>
    </location>
</feature>
<keyword id="KW-1015">Disulfide bond</keyword>
<keyword id="KW-1169">Fusion of virus membrane with host cell membrane</keyword>
<keyword id="KW-1168">Fusion of virus membrane with host membrane</keyword>
<keyword id="KW-1038">Host endoplasmic reticulum</keyword>
<keyword id="KW-1043">Host membrane</keyword>
<keyword id="KW-0426">Late protein</keyword>
<keyword id="KW-0472">Membrane</keyword>
<keyword id="KW-1185">Reference proteome</keyword>
<keyword id="KW-0735">Signal-anchor</keyword>
<keyword id="KW-0812">Transmembrane</keyword>
<keyword id="KW-1133">Transmembrane helix</keyword>
<keyword id="KW-0261">Viral envelope protein</keyword>
<keyword id="KW-1162">Viral penetration into host cytoplasm</keyword>
<keyword id="KW-0946">Virion</keyword>
<keyword id="KW-1160">Virus entry into host cell</keyword>
<gene>
    <name type="primary">OPG107</name>
    <name type="ORF">H2R</name>
</gene>
<dbReference type="EMBL" id="M35027">
    <property type="protein sequence ID" value="AAA48089.1"/>
    <property type="molecule type" value="Genomic_DNA"/>
</dbReference>
<dbReference type="PIR" id="B42514">
    <property type="entry name" value="B42514"/>
</dbReference>
<dbReference type="SMR" id="P20496"/>
<dbReference type="Proteomes" id="UP000008269">
    <property type="component" value="Segment"/>
</dbReference>
<dbReference type="GO" id="GO:0044167">
    <property type="term" value="C:host cell endoplasmic reticulum membrane"/>
    <property type="evidence" value="ECO:0007669"/>
    <property type="project" value="UniProtKB-SubCell"/>
</dbReference>
<dbReference type="GO" id="GO:0016020">
    <property type="term" value="C:membrane"/>
    <property type="evidence" value="ECO:0007669"/>
    <property type="project" value="UniProtKB-KW"/>
</dbReference>
<dbReference type="GO" id="GO:0019031">
    <property type="term" value="C:viral envelope"/>
    <property type="evidence" value="ECO:0007669"/>
    <property type="project" value="UniProtKB-KW"/>
</dbReference>
<dbReference type="GO" id="GO:0055036">
    <property type="term" value="C:virion membrane"/>
    <property type="evidence" value="ECO:0007669"/>
    <property type="project" value="UniProtKB-SubCell"/>
</dbReference>
<dbReference type="GO" id="GO:0019064">
    <property type="term" value="P:fusion of virus membrane with host plasma membrane"/>
    <property type="evidence" value="ECO:0007669"/>
    <property type="project" value="UniProtKB-KW"/>
</dbReference>
<dbReference type="GO" id="GO:0046718">
    <property type="term" value="P:symbiont entry into host cell"/>
    <property type="evidence" value="ECO:0007669"/>
    <property type="project" value="UniProtKB-KW"/>
</dbReference>
<dbReference type="InterPro" id="IPR005023">
    <property type="entry name" value="Pox_LP_H2"/>
</dbReference>
<dbReference type="Pfam" id="PF03356">
    <property type="entry name" value="Pox_LP_H2"/>
    <property type="match status" value="1"/>
</dbReference>
<proteinExistence type="inferred from homology"/>